<accession>B7L758</accession>
<proteinExistence type="inferred from homology"/>
<name>FPG_ECO55</name>
<evidence type="ECO:0000250" key="1"/>
<evidence type="ECO:0000255" key="2">
    <source>
        <dbReference type="HAMAP-Rule" id="MF_00103"/>
    </source>
</evidence>
<organism>
    <name type="scientific">Escherichia coli (strain 55989 / EAEC)</name>
    <dbReference type="NCBI Taxonomy" id="585055"/>
    <lineage>
        <taxon>Bacteria</taxon>
        <taxon>Pseudomonadati</taxon>
        <taxon>Pseudomonadota</taxon>
        <taxon>Gammaproteobacteria</taxon>
        <taxon>Enterobacterales</taxon>
        <taxon>Enterobacteriaceae</taxon>
        <taxon>Escherichia</taxon>
    </lineage>
</organism>
<protein>
    <recommendedName>
        <fullName evidence="2">Formamidopyrimidine-DNA glycosylase</fullName>
        <shortName evidence="2">Fapy-DNA glycosylase</shortName>
        <ecNumber evidence="2">3.2.2.23</ecNumber>
    </recommendedName>
    <alternativeName>
        <fullName evidence="2">DNA-(apurinic or apyrimidinic site) lyase MutM</fullName>
        <shortName evidence="2">AP lyase MutM</shortName>
        <ecNumber evidence="2">4.2.99.18</ecNumber>
    </alternativeName>
</protein>
<gene>
    <name evidence="2" type="primary">mutM</name>
    <name evidence="2" type="synonym">fpg</name>
    <name type="ordered locus">EC55989_4099</name>
</gene>
<sequence>MPELPEVETSRRGIEPHLVGATILHAVVRNGRLRWPVSEEIYRLSDQPVLSVQRRAKYLLLELPEGWIIIHLGMSGSLRILPEELPPEKHDHVELVMSNGKVLRYTDPRRFGAWLWTKELEGHNVLTHLGPEPLSDDFNGEYLHQKCAKKKTAIKPWLMDNKLVVGVGNIYASESLFAAGIHPDRLASSLSLAECELLARVIKAVLLRSIEQGGTTLKDFLQSDGKPGYFAQELQVYGRKGEPCRVCGTPIVATKHAQRATFYCRQCQK</sequence>
<dbReference type="EC" id="3.2.2.23" evidence="2"/>
<dbReference type="EC" id="4.2.99.18" evidence="2"/>
<dbReference type="EMBL" id="CU928145">
    <property type="protein sequence ID" value="CAV00637.1"/>
    <property type="molecule type" value="Genomic_DNA"/>
</dbReference>
<dbReference type="RefSeq" id="WP_001114546.1">
    <property type="nucleotide sequence ID" value="NC_011748.1"/>
</dbReference>
<dbReference type="SMR" id="B7L758"/>
<dbReference type="KEGG" id="eck:EC55989_4099"/>
<dbReference type="HOGENOM" id="CLU_038423_1_1_6"/>
<dbReference type="Proteomes" id="UP000000746">
    <property type="component" value="Chromosome"/>
</dbReference>
<dbReference type="GO" id="GO:0034039">
    <property type="term" value="F:8-oxo-7,8-dihydroguanine DNA N-glycosylase activity"/>
    <property type="evidence" value="ECO:0007669"/>
    <property type="project" value="TreeGrafter"/>
</dbReference>
<dbReference type="GO" id="GO:0140078">
    <property type="term" value="F:class I DNA-(apurinic or apyrimidinic site) endonuclease activity"/>
    <property type="evidence" value="ECO:0007669"/>
    <property type="project" value="UniProtKB-EC"/>
</dbReference>
<dbReference type="GO" id="GO:0003684">
    <property type="term" value="F:damaged DNA binding"/>
    <property type="evidence" value="ECO:0007669"/>
    <property type="project" value="InterPro"/>
</dbReference>
<dbReference type="GO" id="GO:0008270">
    <property type="term" value="F:zinc ion binding"/>
    <property type="evidence" value="ECO:0007669"/>
    <property type="project" value="UniProtKB-UniRule"/>
</dbReference>
<dbReference type="GO" id="GO:0006284">
    <property type="term" value="P:base-excision repair"/>
    <property type="evidence" value="ECO:0007669"/>
    <property type="project" value="InterPro"/>
</dbReference>
<dbReference type="CDD" id="cd08966">
    <property type="entry name" value="EcFpg-like_N"/>
    <property type="match status" value="1"/>
</dbReference>
<dbReference type="FunFam" id="1.10.8.50:FF:000003">
    <property type="entry name" value="Formamidopyrimidine-DNA glycosylase"/>
    <property type="match status" value="1"/>
</dbReference>
<dbReference type="FunFam" id="3.20.190.10:FF:000001">
    <property type="entry name" value="Formamidopyrimidine-DNA glycosylase"/>
    <property type="match status" value="1"/>
</dbReference>
<dbReference type="Gene3D" id="1.10.8.50">
    <property type="match status" value="1"/>
</dbReference>
<dbReference type="Gene3D" id="3.20.190.10">
    <property type="entry name" value="MutM-like, N-terminal"/>
    <property type="match status" value="1"/>
</dbReference>
<dbReference type="HAMAP" id="MF_00103">
    <property type="entry name" value="Fapy_DNA_glycosyl"/>
    <property type="match status" value="1"/>
</dbReference>
<dbReference type="InterPro" id="IPR015886">
    <property type="entry name" value="DNA_glyclase/AP_lyase_DNA-bd"/>
</dbReference>
<dbReference type="InterPro" id="IPR015887">
    <property type="entry name" value="DNA_glyclase_Znf_dom_DNA_BS"/>
</dbReference>
<dbReference type="InterPro" id="IPR020629">
    <property type="entry name" value="Formamido-pyr_DNA_Glyclase"/>
</dbReference>
<dbReference type="InterPro" id="IPR012319">
    <property type="entry name" value="FPG_cat"/>
</dbReference>
<dbReference type="InterPro" id="IPR035937">
    <property type="entry name" value="MutM-like_N-ter"/>
</dbReference>
<dbReference type="InterPro" id="IPR010979">
    <property type="entry name" value="Ribosomal_uS13-like_H2TH"/>
</dbReference>
<dbReference type="InterPro" id="IPR000214">
    <property type="entry name" value="Znf_DNA_glyclase/AP_lyase"/>
</dbReference>
<dbReference type="InterPro" id="IPR010663">
    <property type="entry name" value="Znf_FPG/IleRS"/>
</dbReference>
<dbReference type="NCBIfam" id="TIGR00577">
    <property type="entry name" value="fpg"/>
    <property type="match status" value="1"/>
</dbReference>
<dbReference type="NCBIfam" id="NF002211">
    <property type="entry name" value="PRK01103.1"/>
    <property type="match status" value="1"/>
</dbReference>
<dbReference type="PANTHER" id="PTHR22993">
    <property type="entry name" value="FORMAMIDOPYRIMIDINE-DNA GLYCOSYLASE"/>
    <property type="match status" value="1"/>
</dbReference>
<dbReference type="PANTHER" id="PTHR22993:SF9">
    <property type="entry name" value="FORMAMIDOPYRIMIDINE-DNA GLYCOSYLASE"/>
    <property type="match status" value="1"/>
</dbReference>
<dbReference type="Pfam" id="PF01149">
    <property type="entry name" value="Fapy_DNA_glyco"/>
    <property type="match status" value="1"/>
</dbReference>
<dbReference type="Pfam" id="PF06831">
    <property type="entry name" value="H2TH"/>
    <property type="match status" value="1"/>
</dbReference>
<dbReference type="Pfam" id="PF06827">
    <property type="entry name" value="zf-FPG_IleRS"/>
    <property type="match status" value="1"/>
</dbReference>
<dbReference type="SMART" id="SM00898">
    <property type="entry name" value="Fapy_DNA_glyco"/>
    <property type="match status" value="1"/>
</dbReference>
<dbReference type="SMART" id="SM01232">
    <property type="entry name" value="H2TH"/>
    <property type="match status" value="1"/>
</dbReference>
<dbReference type="SUPFAM" id="SSF57716">
    <property type="entry name" value="Glucocorticoid receptor-like (DNA-binding domain)"/>
    <property type="match status" value="1"/>
</dbReference>
<dbReference type="SUPFAM" id="SSF81624">
    <property type="entry name" value="N-terminal domain of MutM-like DNA repair proteins"/>
    <property type="match status" value="1"/>
</dbReference>
<dbReference type="SUPFAM" id="SSF46946">
    <property type="entry name" value="S13-like H2TH domain"/>
    <property type="match status" value="1"/>
</dbReference>
<dbReference type="PROSITE" id="PS51068">
    <property type="entry name" value="FPG_CAT"/>
    <property type="match status" value="1"/>
</dbReference>
<dbReference type="PROSITE" id="PS01242">
    <property type="entry name" value="ZF_FPG_1"/>
    <property type="match status" value="1"/>
</dbReference>
<dbReference type="PROSITE" id="PS51066">
    <property type="entry name" value="ZF_FPG_2"/>
    <property type="match status" value="1"/>
</dbReference>
<comment type="function">
    <text evidence="2">Involved in base excision repair of DNA damaged by oxidation or by mutagenic agents. Acts as a DNA glycosylase that recognizes and removes damaged bases. Has a preference for oxidized purines, such as 7,8-dihydro-8-oxoguanine (8-oxoG). Has AP (apurinic/apyrimidinic) lyase activity and introduces nicks in the DNA strand. Cleaves the DNA backbone by beta-delta elimination to generate a single-strand break at the site of the removed base with both 3'- and 5'-phosphates.</text>
</comment>
<comment type="catalytic activity">
    <reaction evidence="2">
        <text>Hydrolysis of DNA containing ring-opened 7-methylguanine residues, releasing 2,6-diamino-4-hydroxy-5-(N-methyl)formamidopyrimidine.</text>
        <dbReference type="EC" id="3.2.2.23"/>
    </reaction>
</comment>
<comment type="catalytic activity">
    <reaction evidence="2">
        <text>2'-deoxyribonucleotide-(2'-deoxyribose 5'-phosphate)-2'-deoxyribonucleotide-DNA = a 3'-end 2'-deoxyribonucleotide-(2,3-dehydro-2,3-deoxyribose 5'-phosphate)-DNA + a 5'-end 5'-phospho-2'-deoxyribonucleoside-DNA + H(+)</text>
        <dbReference type="Rhea" id="RHEA:66592"/>
        <dbReference type="Rhea" id="RHEA-COMP:13180"/>
        <dbReference type="Rhea" id="RHEA-COMP:16897"/>
        <dbReference type="Rhea" id="RHEA-COMP:17067"/>
        <dbReference type="ChEBI" id="CHEBI:15378"/>
        <dbReference type="ChEBI" id="CHEBI:136412"/>
        <dbReference type="ChEBI" id="CHEBI:157695"/>
        <dbReference type="ChEBI" id="CHEBI:167181"/>
        <dbReference type="EC" id="4.2.99.18"/>
    </reaction>
</comment>
<comment type="cofactor">
    <cofactor evidence="2">
        <name>Zn(2+)</name>
        <dbReference type="ChEBI" id="CHEBI:29105"/>
    </cofactor>
    <text evidence="2">Binds 1 zinc ion per subunit.</text>
</comment>
<comment type="subunit">
    <text evidence="2">Monomer.</text>
</comment>
<comment type="similarity">
    <text evidence="2">Belongs to the FPG family.</text>
</comment>
<keyword id="KW-0227">DNA damage</keyword>
<keyword id="KW-0234">DNA repair</keyword>
<keyword id="KW-0238">DNA-binding</keyword>
<keyword id="KW-0326">Glycosidase</keyword>
<keyword id="KW-0378">Hydrolase</keyword>
<keyword id="KW-0456">Lyase</keyword>
<keyword id="KW-0479">Metal-binding</keyword>
<keyword id="KW-0511">Multifunctional enzyme</keyword>
<keyword id="KW-1185">Reference proteome</keyword>
<keyword id="KW-0862">Zinc</keyword>
<keyword id="KW-0863">Zinc-finger</keyword>
<feature type="initiator methionine" description="Removed" evidence="1">
    <location>
        <position position="1"/>
    </location>
</feature>
<feature type="chain" id="PRO_1000118888" description="Formamidopyrimidine-DNA glycosylase">
    <location>
        <begin position="2"/>
        <end position="269"/>
    </location>
</feature>
<feature type="zinc finger region" description="FPG-type" evidence="2">
    <location>
        <begin position="235"/>
        <end position="269"/>
    </location>
</feature>
<feature type="active site" description="Schiff-base intermediate with DNA" evidence="2">
    <location>
        <position position="2"/>
    </location>
</feature>
<feature type="active site" description="Proton donor" evidence="2">
    <location>
        <position position="3"/>
    </location>
</feature>
<feature type="active site" description="Proton donor; for beta-elimination activity" evidence="2">
    <location>
        <position position="57"/>
    </location>
</feature>
<feature type="active site" description="Proton donor; for delta-elimination activity" evidence="2">
    <location>
        <position position="259"/>
    </location>
</feature>
<feature type="binding site" evidence="2">
    <location>
        <position position="90"/>
    </location>
    <ligand>
        <name>DNA</name>
        <dbReference type="ChEBI" id="CHEBI:16991"/>
    </ligand>
</feature>
<feature type="binding site" evidence="2">
    <location>
        <position position="109"/>
    </location>
    <ligand>
        <name>DNA</name>
        <dbReference type="ChEBI" id="CHEBI:16991"/>
    </ligand>
</feature>
<feature type="binding site" evidence="2">
    <location>
        <position position="150"/>
    </location>
    <ligand>
        <name>DNA</name>
        <dbReference type="ChEBI" id="CHEBI:16991"/>
    </ligand>
</feature>
<reference key="1">
    <citation type="journal article" date="2009" name="PLoS Genet.">
        <title>Organised genome dynamics in the Escherichia coli species results in highly diverse adaptive paths.</title>
        <authorList>
            <person name="Touchon M."/>
            <person name="Hoede C."/>
            <person name="Tenaillon O."/>
            <person name="Barbe V."/>
            <person name="Baeriswyl S."/>
            <person name="Bidet P."/>
            <person name="Bingen E."/>
            <person name="Bonacorsi S."/>
            <person name="Bouchier C."/>
            <person name="Bouvet O."/>
            <person name="Calteau A."/>
            <person name="Chiapello H."/>
            <person name="Clermont O."/>
            <person name="Cruveiller S."/>
            <person name="Danchin A."/>
            <person name="Diard M."/>
            <person name="Dossat C."/>
            <person name="Karoui M.E."/>
            <person name="Frapy E."/>
            <person name="Garry L."/>
            <person name="Ghigo J.M."/>
            <person name="Gilles A.M."/>
            <person name="Johnson J."/>
            <person name="Le Bouguenec C."/>
            <person name="Lescat M."/>
            <person name="Mangenot S."/>
            <person name="Martinez-Jehanne V."/>
            <person name="Matic I."/>
            <person name="Nassif X."/>
            <person name="Oztas S."/>
            <person name="Petit M.A."/>
            <person name="Pichon C."/>
            <person name="Rouy Z."/>
            <person name="Ruf C.S."/>
            <person name="Schneider D."/>
            <person name="Tourret J."/>
            <person name="Vacherie B."/>
            <person name="Vallenet D."/>
            <person name="Medigue C."/>
            <person name="Rocha E.P.C."/>
            <person name="Denamur E."/>
        </authorList>
    </citation>
    <scope>NUCLEOTIDE SEQUENCE [LARGE SCALE GENOMIC DNA]</scope>
    <source>
        <strain>55989 / EAEC</strain>
    </source>
</reference>